<evidence type="ECO:0000255" key="1">
    <source>
        <dbReference type="HAMAP-Rule" id="MF_00038"/>
    </source>
</evidence>
<comment type="function">
    <text evidence="1">Catalyzes the initial step of the lipid cycle reactions in the biosynthesis of the cell wall peptidoglycan: transfers peptidoglycan precursor phospho-MurNAc-pentapeptide from UDP-MurNAc-pentapeptide onto the lipid carrier undecaprenyl phosphate, yielding undecaprenyl-pyrophosphoryl-MurNAc-pentapeptide, known as lipid I.</text>
</comment>
<comment type="catalytic activity">
    <reaction evidence="1">
        <text>UDP-N-acetyl-alpha-D-muramoyl-L-alanyl-gamma-D-glutamyl-meso-2,6-diaminopimeloyl-D-alanyl-D-alanine + di-trans,octa-cis-undecaprenyl phosphate = di-trans,octa-cis-undecaprenyl diphospho-N-acetyl-alpha-D-muramoyl-L-alanyl-D-glutamyl-meso-2,6-diaminopimeloyl-D-alanyl-D-alanine + UMP</text>
        <dbReference type="Rhea" id="RHEA:28386"/>
        <dbReference type="ChEBI" id="CHEBI:57865"/>
        <dbReference type="ChEBI" id="CHEBI:60392"/>
        <dbReference type="ChEBI" id="CHEBI:61386"/>
        <dbReference type="ChEBI" id="CHEBI:61387"/>
        <dbReference type="EC" id="2.7.8.13"/>
    </reaction>
</comment>
<comment type="cofactor">
    <cofactor evidence="1">
        <name>Mg(2+)</name>
        <dbReference type="ChEBI" id="CHEBI:18420"/>
    </cofactor>
</comment>
<comment type="pathway">
    <text evidence="1">Cell wall biogenesis; peptidoglycan biosynthesis.</text>
</comment>
<comment type="subcellular location">
    <subcellularLocation>
        <location evidence="1">Cell inner membrane</location>
        <topology evidence="1">Multi-pass membrane protein</topology>
    </subcellularLocation>
</comment>
<comment type="similarity">
    <text evidence="1">Belongs to the glycosyltransferase 4 family. MraY subfamily.</text>
</comment>
<feature type="chain" id="PRO_1000090669" description="Phospho-N-acetylmuramoyl-pentapeptide-transferase">
    <location>
        <begin position="1"/>
        <end position="360"/>
    </location>
</feature>
<feature type="topological domain" description="Periplasmic" evidence="1">
    <location>
        <begin position="1"/>
        <end position="25"/>
    </location>
</feature>
<feature type="transmembrane region" description="Helical" evidence="1">
    <location>
        <begin position="26"/>
        <end position="46"/>
    </location>
</feature>
<feature type="topological domain" description="Cytoplasmic" evidence="1">
    <location>
        <begin position="47"/>
        <end position="71"/>
    </location>
</feature>
<feature type="transmembrane region" description="Helical" evidence="1">
    <location>
        <begin position="72"/>
        <end position="92"/>
    </location>
</feature>
<feature type="topological domain" description="Periplasmic" evidence="1">
    <location>
        <position position="93"/>
    </location>
</feature>
<feature type="transmembrane region" description="Helical" evidence="1">
    <location>
        <begin position="94"/>
        <end position="114"/>
    </location>
</feature>
<feature type="topological domain" description="Cytoplasmic" evidence="1">
    <location>
        <begin position="115"/>
        <end position="131"/>
    </location>
</feature>
<feature type="transmembrane region" description="Helical" evidence="1">
    <location>
        <begin position="132"/>
        <end position="152"/>
    </location>
</feature>
<feature type="topological domain" description="Periplasmic" evidence="1">
    <location>
        <begin position="153"/>
        <end position="167"/>
    </location>
</feature>
<feature type="transmembrane region" description="Helical" evidence="1">
    <location>
        <begin position="168"/>
        <end position="188"/>
    </location>
</feature>
<feature type="topological domain" description="Cytoplasmic" evidence="1">
    <location>
        <begin position="189"/>
        <end position="198"/>
    </location>
</feature>
<feature type="transmembrane region" description="Helical" evidence="1">
    <location>
        <begin position="199"/>
        <end position="219"/>
    </location>
</feature>
<feature type="topological domain" description="Periplasmic" evidence="1">
    <location>
        <begin position="220"/>
        <end position="235"/>
    </location>
</feature>
<feature type="transmembrane region" description="Helical" evidence="1">
    <location>
        <begin position="236"/>
        <end position="256"/>
    </location>
</feature>
<feature type="topological domain" description="Cytoplasmic" evidence="1">
    <location>
        <begin position="257"/>
        <end position="262"/>
    </location>
</feature>
<feature type="transmembrane region" description="Helical" evidence="1">
    <location>
        <begin position="263"/>
        <end position="283"/>
    </location>
</feature>
<feature type="topological domain" description="Periplasmic" evidence="1">
    <location>
        <begin position="284"/>
        <end position="287"/>
    </location>
</feature>
<feature type="transmembrane region" description="Helical" evidence="1">
    <location>
        <begin position="288"/>
        <end position="308"/>
    </location>
</feature>
<feature type="topological domain" description="Cytoplasmic" evidence="1">
    <location>
        <begin position="309"/>
        <end position="337"/>
    </location>
</feature>
<feature type="transmembrane region" description="Helical" evidence="1">
    <location>
        <begin position="338"/>
        <end position="358"/>
    </location>
</feature>
<feature type="topological domain" description="Periplasmic" evidence="1">
    <location>
        <begin position="359"/>
        <end position="360"/>
    </location>
</feature>
<gene>
    <name evidence="1" type="primary">mraY</name>
    <name type="ordered locus">SNSL254_A0137</name>
</gene>
<proteinExistence type="inferred from homology"/>
<protein>
    <recommendedName>
        <fullName evidence="1">Phospho-N-acetylmuramoyl-pentapeptide-transferase</fullName>
        <ecNumber evidence="1">2.7.8.13</ecNumber>
    </recommendedName>
    <alternativeName>
        <fullName evidence="1">UDP-MurNAc-pentapeptide phosphotransferase</fullName>
    </alternativeName>
</protein>
<organism>
    <name type="scientific">Salmonella newport (strain SL254)</name>
    <dbReference type="NCBI Taxonomy" id="423368"/>
    <lineage>
        <taxon>Bacteria</taxon>
        <taxon>Pseudomonadati</taxon>
        <taxon>Pseudomonadota</taxon>
        <taxon>Gammaproteobacteria</taxon>
        <taxon>Enterobacterales</taxon>
        <taxon>Enterobacteriaceae</taxon>
        <taxon>Salmonella</taxon>
    </lineage>
</organism>
<name>MRAY_SALNS</name>
<dbReference type="EC" id="2.7.8.13" evidence="1"/>
<dbReference type="EMBL" id="CP001113">
    <property type="protein sequence ID" value="ACF61690.1"/>
    <property type="molecule type" value="Genomic_DNA"/>
</dbReference>
<dbReference type="RefSeq" id="WP_000964138.1">
    <property type="nucleotide sequence ID" value="NZ_CCMR01000003.1"/>
</dbReference>
<dbReference type="SMR" id="B4SU47"/>
<dbReference type="KEGG" id="see:SNSL254_A0137"/>
<dbReference type="HOGENOM" id="CLU_023982_0_0_6"/>
<dbReference type="UniPathway" id="UPA00219"/>
<dbReference type="Proteomes" id="UP000008824">
    <property type="component" value="Chromosome"/>
</dbReference>
<dbReference type="GO" id="GO:0005886">
    <property type="term" value="C:plasma membrane"/>
    <property type="evidence" value="ECO:0007669"/>
    <property type="project" value="UniProtKB-SubCell"/>
</dbReference>
<dbReference type="GO" id="GO:0046872">
    <property type="term" value="F:metal ion binding"/>
    <property type="evidence" value="ECO:0007669"/>
    <property type="project" value="UniProtKB-KW"/>
</dbReference>
<dbReference type="GO" id="GO:0008963">
    <property type="term" value="F:phospho-N-acetylmuramoyl-pentapeptide-transferase activity"/>
    <property type="evidence" value="ECO:0007669"/>
    <property type="project" value="UniProtKB-UniRule"/>
</dbReference>
<dbReference type="GO" id="GO:0051992">
    <property type="term" value="F:UDP-N-acetylmuramoyl-L-alanyl-D-glutamyl-meso-2,6-diaminopimelyl-D-alanyl-D-alanine:undecaprenyl-phosphate transferase activity"/>
    <property type="evidence" value="ECO:0007669"/>
    <property type="project" value="RHEA"/>
</dbReference>
<dbReference type="GO" id="GO:0051301">
    <property type="term" value="P:cell division"/>
    <property type="evidence" value="ECO:0007669"/>
    <property type="project" value="UniProtKB-KW"/>
</dbReference>
<dbReference type="GO" id="GO:0071555">
    <property type="term" value="P:cell wall organization"/>
    <property type="evidence" value="ECO:0007669"/>
    <property type="project" value="UniProtKB-KW"/>
</dbReference>
<dbReference type="GO" id="GO:0009252">
    <property type="term" value="P:peptidoglycan biosynthetic process"/>
    <property type="evidence" value="ECO:0007669"/>
    <property type="project" value="UniProtKB-UniRule"/>
</dbReference>
<dbReference type="GO" id="GO:0008360">
    <property type="term" value="P:regulation of cell shape"/>
    <property type="evidence" value="ECO:0007669"/>
    <property type="project" value="UniProtKB-KW"/>
</dbReference>
<dbReference type="CDD" id="cd06852">
    <property type="entry name" value="GT_MraY"/>
    <property type="match status" value="1"/>
</dbReference>
<dbReference type="HAMAP" id="MF_00038">
    <property type="entry name" value="MraY"/>
    <property type="match status" value="1"/>
</dbReference>
<dbReference type="InterPro" id="IPR000715">
    <property type="entry name" value="Glycosyl_transferase_4"/>
</dbReference>
<dbReference type="InterPro" id="IPR003524">
    <property type="entry name" value="PNAcMuramoyl-5peptid_Trfase"/>
</dbReference>
<dbReference type="InterPro" id="IPR018480">
    <property type="entry name" value="PNAcMuramoyl-5peptid_Trfase_CS"/>
</dbReference>
<dbReference type="NCBIfam" id="TIGR00445">
    <property type="entry name" value="mraY"/>
    <property type="match status" value="1"/>
</dbReference>
<dbReference type="PANTHER" id="PTHR22926">
    <property type="entry name" value="PHOSPHO-N-ACETYLMURAMOYL-PENTAPEPTIDE-TRANSFERASE"/>
    <property type="match status" value="1"/>
</dbReference>
<dbReference type="PANTHER" id="PTHR22926:SF5">
    <property type="entry name" value="PHOSPHO-N-ACETYLMURAMOYL-PENTAPEPTIDE-TRANSFERASE HOMOLOG"/>
    <property type="match status" value="1"/>
</dbReference>
<dbReference type="Pfam" id="PF00953">
    <property type="entry name" value="Glycos_transf_4"/>
    <property type="match status" value="1"/>
</dbReference>
<dbReference type="Pfam" id="PF10555">
    <property type="entry name" value="MraY_sig1"/>
    <property type="match status" value="1"/>
</dbReference>
<dbReference type="PROSITE" id="PS01347">
    <property type="entry name" value="MRAY_1"/>
    <property type="match status" value="1"/>
</dbReference>
<dbReference type="PROSITE" id="PS01348">
    <property type="entry name" value="MRAY_2"/>
    <property type="match status" value="1"/>
</dbReference>
<reference key="1">
    <citation type="journal article" date="2011" name="J. Bacteriol.">
        <title>Comparative genomics of 28 Salmonella enterica isolates: evidence for CRISPR-mediated adaptive sublineage evolution.</title>
        <authorList>
            <person name="Fricke W.F."/>
            <person name="Mammel M.K."/>
            <person name="McDermott P.F."/>
            <person name="Tartera C."/>
            <person name="White D.G."/>
            <person name="Leclerc J.E."/>
            <person name="Ravel J."/>
            <person name="Cebula T.A."/>
        </authorList>
    </citation>
    <scope>NUCLEOTIDE SEQUENCE [LARGE SCALE GENOMIC DNA]</scope>
    <source>
        <strain>SL254</strain>
    </source>
</reference>
<accession>B4SU47</accession>
<keyword id="KW-0131">Cell cycle</keyword>
<keyword id="KW-0132">Cell division</keyword>
<keyword id="KW-0997">Cell inner membrane</keyword>
<keyword id="KW-1003">Cell membrane</keyword>
<keyword id="KW-0133">Cell shape</keyword>
<keyword id="KW-0961">Cell wall biogenesis/degradation</keyword>
<keyword id="KW-0460">Magnesium</keyword>
<keyword id="KW-0472">Membrane</keyword>
<keyword id="KW-0479">Metal-binding</keyword>
<keyword id="KW-0573">Peptidoglycan synthesis</keyword>
<keyword id="KW-0808">Transferase</keyword>
<keyword id="KW-0812">Transmembrane</keyword>
<keyword id="KW-1133">Transmembrane helix</keyword>
<sequence length="360" mass="40007">MLVWLAEHLVKYYSGFNVFSYLTFRAIVSLLTALFISLWMGPRMIARLQKLSFGQVVRNDGPESHFSKRGTPTMGGIMILTAIVISVLLWAYPSNPYVWCVLVVLIGYGIIGFVDDYRKVVRKDTKGLIARWKYFWMSVIALGVAFALYLVGKDTPATQLVVPFFKDVMPQLGLFYILLSYFVIVGTGNAVNLTDGLDGLAIMPTVFVAAGFALVAWATGNMNFANYLHIPYLRHAGELVIVCTAIVGAGLGFLWFNTYPAQVFMGDVGSLALGGALGIIAVLLRQEFLLVIMGGVFVVETLSVILQVGSFKLRGQRIFRMAPIHHHYELKGWPEPRVIVRFWIISLMLVLIGLATLKVR</sequence>